<proteinExistence type="inferred from homology"/>
<keyword id="KW-0963">Cytoplasm</keyword>
<keyword id="KW-0489">Methyltransferase</keyword>
<keyword id="KW-0949">S-adenosyl-L-methionine</keyword>
<keyword id="KW-0808">Transferase</keyword>
<feature type="chain" id="PRO_1000045996" description="Ribosomal protein L11 methyltransferase">
    <location>
        <begin position="1"/>
        <end position="300"/>
    </location>
</feature>
<feature type="binding site" evidence="1">
    <location>
        <position position="152"/>
    </location>
    <ligand>
        <name>S-adenosyl-L-methionine</name>
        <dbReference type="ChEBI" id="CHEBI:59789"/>
    </ligand>
</feature>
<feature type="binding site" evidence="1">
    <location>
        <position position="173"/>
    </location>
    <ligand>
        <name>S-adenosyl-L-methionine</name>
        <dbReference type="ChEBI" id="CHEBI:59789"/>
    </ligand>
</feature>
<feature type="binding site" evidence="1">
    <location>
        <position position="195"/>
    </location>
    <ligand>
        <name>S-adenosyl-L-methionine</name>
        <dbReference type="ChEBI" id="CHEBI:59789"/>
    </ligand>
</feature>
<feature type="binding site" evidence="1">
    <location>
        <position position="234"/>
    </location>
    <ligand>
        <name>S-adenosyl-L-methionine</name>
        <dbReference type="ChEBI" id="CHEBI:59789"/>
    </ligand>
</feature>
<gene>
    <name evidence="1" type="primary">prmA</name>
    <name type="ordered locus">BURPS1710b_3502</name>
</gene>
<sequence length="300" mass="32566">MSYRELVAELPREHAEALSDALVELGALSVSVEDADADTPDEQPLFGEPGLVPERTAWQHSRVIALVDATQDPAVLLAAAANEAGLAQAPRFELREVEEQDWVRLTQSQFEPIHIGEKIWVVPSWHDAPQPDALVLELDPGLAFGTGSHPTTRLCMEWLEQTVQPGQTVLDYGCGSGILAILAKKCGAGRVTGIDIDPQAVEAARHNSERNRADVTYGLPDDCPDGEFDIVVANILSNPLKLMASMLASKVKPGGRIALSGVLARQADEVASVYARYIDIAVWREHEGWVCLAGTRRESH</sequence>
<protein>
    <recommendedName>
        <fullName evidence="1">Ribosomal protein L11 methyltransferase</fullName>
        <shortName evidence="1">L11 Mtase</shortName>
        <ecNumber evidence="1">2.1.1.-</ecNumber>
    </recommendedName>
</protein>
<evidence type="ECO:0000255" key="1">
    <source>
        <dbReference type="HAMAP-Rule" id="MF_00735"/>
    </source>
</evidence>
<comment type="function">
    <text evidence="1">Methylates ribosomal protein L11.</text>
</comment>
<comment type="catalytic activity">
    <reaction evidence="1">
        <text>L-lysyl-[protein] + 3 S-adenosyl-L-methionine = N(6),N(6),N(6)-trimethyl-L-lysyl-[protein] + 3 S-adenosyl-L-homocysteine + 3 H(+)</text>
        <dbReference type="Rhea" id="RHEA:54192"/>
        <dbReference type="Rhea" id="RHEA-COMP:9752"/>
        <dbReference type="Rhea" id="RHEA-COMP:13826"/>
        <dbReference type="ChEBI" id="CHEBI:15378"/>
        <dbReference type="ChEBI" id="CHEBI:29969"/>
        <dbReference type="ChEBI" id="CHEBI:57856"/>
        <dbReference type="ChEBI" id="CHEBI:59789"/>
        <dbReference type="ChEBI" id="CHEBI:61961"/>
    </reaction>
</comment>
<comment type="subcellular location">
    <subcellularLocation>
        <location evidence="1">Cytoplasm</location>
    </subcellularLocation>
</comment>
<comment type="similarity">
    <text evidence="1">Belongs to the methyltransferase superfamily. PrmA family.</text>
</comment>
<name>PRMA_BURP1</name>
<dbReference type="EC" id="2.1.1.-" evidence="1"/>
<dbReference type="EMBL" id="CP000124">
    <property type="protein sequence ID" value="ABA51083.1"/>
    <property type="molecule type" value="Genomic_DNA"/>
</dbReference>
<dbReference type="RefSeq" id="WP_004527770.1">
    <property type="nucleotide sequence ID" value="NC_007434.1"/>
</dbReference>
<dbReference type="SMR" id="Q3JNI0"/>
<dbReference type="EnsemblBacteria" id="ABA51083">
    <property type="protein sequence ID" value="ABA51083"/>
    <property type="gene ID" value="BURPS1710b_3502"/>
</dbReference>
<dbReference type="KEGG" id="bpm:BURPS1710b_3502"/>
<dbReference type="HOGENOM" id="CLU_049382_4_1_4"/>
<dbReference type="Proteomes" id="UP000002700">
    <property type="component" value="Chromosome I"/>
</dbReference>
<dbReference type="GO" id="GO:0005829">
    <property type="term" value="C:cytosol"/>
    <property type="evidence" value="ECO:0007669"/>
    <property type="project" value="TreeGrafter"/>
</dbReference>
<dbReference type="GO" id="GO:0016279">
    <property type="term" value="F:protein-lysine N-methyltransferase activity"/>
    <property type="evidence" value="ECO:0007669"/>
    <property type="project" value="TreeGrafter"/>
</dbReference>
<dbReference type="GO" id="GO:0032259">
    <property type="term" value="P:methylation"/>
    <property type="evidence" value="ECO:0007669"/>
    <property type="project" value="UniProtKB-KW"/>
</dbReference>
<dbReference type="CDD" id="cd02440">
    <property type="entry name" value="AdoMet_MTases"/>
    <property type="match status" value="1"/>
</dbReference>
<dbReference type="Gene3D" id="3.40.50.150">
    <property type="entry name" value="Vaccinia Virus protein VP39"/>
    <property type="match status" value="1"/>
</dbReference>
<dbReference type="HAMAP" id="MF_00735">
    <property type="entry name" value="Methyltr_PrmA"/>
    <property type="match status" value="1"/>
</dbReference>
<dbReference type="InterPro" id="IPR050078">
    <property type="entry name" value="Ribosomal_L11_MeTrfase_PrmA"/>
</dbReference>
<dbReference type="InterPro" id="IPR004498">
    <property type="entry name" value="Ribosomal_PrmA_MeTrfase"/>
</dbReference>
<dbReference type="InterPro" id="IPR029063">
    <property type="entry name" value="SAM-dependent_MTases_sf"/>
</dbReference>
<dbReference type="NCBIfam" id="TIGR00406">
    <property type="entry name" value="prmA"/>
    <property type="match status" value="1"/>
</dbReference>
<dbReference type="PANTHER" id="PTHR43648">
    <property type="entry name" value="ELECTRON TRANSFER FLAVOPROTEIN BETA SUBUNIT LYSINE METHYLTRANSFERASE"/>
    <property type="match status" value="1"/>
</dbReference>
<dbReference type="PANTHER" id="PTHR43648:SF1">
    <property type="entry name" value="ELECTRON TRANSFER FLAVOPROTEIN BETA SUBUNIT LYSINE METHYLTRANSFERASE"/>
    <property type="match status" value="1"/>
</dbReference>
<dbReference type="Pfam" id="PF06325">
    <property type="entry name" value="PrmA"/>
    <property type="match status" value="1"/>
</dbReference>
<dbReference type="PIRSF" id="PIRSF000401">
    <property type="entry name" value="RPL11_MTase"/>
    <property type="match status" value="1"/>
</dbReference>
<dbReference type="SUPFAM" id="SSF53335">
    <property type="entry name" value="S-adenosyl-L-methionine-dependent methyltransferases"/>
    <property type="match status" value="1"/>
</dbReference>
<organism>
    <name type="scientific">Burkholderia pseudomallei (strain 1710b)</name>
    <dbReference type="NCBI Taxonomy" id="320372"/>
    <lineage>
        <taxon>Bacteria</taxon>
        <taxon>Pseudomonadati</taxon>
        <taxon>Pseudomonadota</taxon>
        <taxon>Betaproteobacteria</taxon>
        <taxon>Burkholderiales</taxon>
        <taxon>Burkholderiaceae</taxon>
        <taxon>Burkholderia</taxon>
        <taxon>pseudomallei group</taxon>
    </lineage>
</organism>
<accession>Q3JNI0</accession>
<reference key="1">
    <citation type="journal article" date="2010" name="Genome Biol. Evol.">
        <title>Continuing evolution of Burkholderia mallei through genome reduction and large-scale rearrangements.</title>
        <authorList>
            <person name="Losada L."/>
            <person name="Ronning C.M."/>
            <person name="DeShazer D."/>
            <person name="Woods D."/>
            <person name="Fedorova N."/>
            <person name="Kim H.S."/>
            <person name="Shabalina S.A."/>
            <person name="Pearson T.R."/>
            <person name="Brinkac L."/>
            <person name="Tan P."/>
            <person name="Nandi T."/>
            <person name="Crabtree J."/>
            <person name="Badger J."/>
            <person name="Beckstrom-Sternberg S."/>
            <person name="Saqib M."/>
            <person name="Schutzer S.E."/>
            <person name="Keim P."/>
            <person name="Nierman W.C."/>
        </authorList>
    </citation>
    <scope>NUCLEOTIDE SEQUENCE [LARGE SCALE GENOMIC DNA]</scope>
    <source>
        <strain>1710b</strain>
    </source>
</reference>